<organism>
    <name type="scientific">Kosmotoga olearia (strain ATCC BAA-1733 / DSM 21960 / TBF 19.5.1)</name>
    <dbReference type="NCBI Taxonomy" id="521045"/>
    <lineage>
        <taxon>Bacteria</taxon>
        <taxon>Thermotogati</taxon>
        <taxon>Thermotogota</taxon>
        <taxon>Thermotogae</taxon>
        <taxon>Kosmotogales</taxon>
        <taxon>Kosmotogaceae</taxon>
        <taxon>Kosmotoga</taxon>
    </lineage>
</organism>
<protein>
    <recommendedName>
        <fullName evidence="1">CinA-like protein</fullName>
    </recommendedName>
</protein>
<reference key="1">
    <citation type="submission" date="2009-06" db="EMBL/GenBank/DDBJ databases">
        <title>Complete sequence of Thermotogales bacterium TBF 19.5.1.</title>
        <authorList>
            <consortium name="US DOE Joint Genome Institute"/>
            <person name="Lucas S."/>
            <person name="Copeland A."/>
            <person name="Lapidus A."/>
            <person name="Glavina del Rio T."/>
            <person name="Tice H."/>
            <person name="Bruce D."/>
            <person name="Goodwin L."/>
            <person name="Pitluck S."/>
            <person name="Chertkov O."/>
            <person name="Brettin T."/>
            <person name="Detter J.C."/>
            <person name="Han C."/>
            <person name="Schmutz J."/>
            <person name="Larimer F."/>
            <person name="Land M."/>
            <person name="Hauser L."/>
            <person name="Kyrpides N."/>
            <person name="Ovchinnikova G."/>
            <person name="Noll K."/>
        </authorList>
    </citation>
    <scope>NUCLEOTIDE SEQUENCE [LARGE SCALE GENOMIC DNA]</scope>
    <source>
        <strain>ATCC BAA-1733 / DSM 21960 / TBF 19.5.1</strain>
    </source>
</reference>
<name>CINAL_KOSOT</name>
<keyword id="KW-1185">Reference proteome</keyword>
<comment type="similarity">
    <text evidence="1">Belongs to the CinA family.</text>
</comment>
<evidence type="ECO:0000255" key="1">
    <source>
        <dbReference type="HAMAP-Rule" id="MF_00226"/>
    </source>
</evidence>
<feature type="chain" id="PRO_1000204328" description="CinA-like protein">
    <location>
        <begin position="1"/>
        <end position="412"/>
    </location>
</feature>
<dbReference type="EMBL" id="CP001634">
    <property type="protein sequence ID" value="ACR80455.1"/>
    <property type="molecule type" value="Genomic_DNA"/>
</dbReference>
<dbReference type="RefSeq" id="WP_015869099.1">
    <property type="nucleotide sequence ID" value="NC_012785.1"/>
</dbReference>
<dbReference type="SMR" id="C5CFW1"/>
<dbReference type="STRING" id="521045.Kole_1770"/>
<dbReference type="KEGG" id="kol:Kole_1770"/>
<dbReference type="eggNOG" id="COG1058">
    <property type="taxonomic scope" value="Bacteria"/>
</dbReference>
<dbReference type="eggNOG" id="COG1546">
    <property type="taxonomic scope" value="Bacteria"/>
</dbReference>
<dbReference type="HOGENOM" id="CLU_030805_9_3_0"/>
<dbReference type="OrthoDB" id="9801454at2"/>
<dbReference type="Proteomes" id="UP000002382">
    <property type="component" value="Chromosome"/>
</dbReference>
<dbReference type="CDD" id="cd00885">
    <property type="entry name" value="cinA"/>
    <property type="match status" value="1"/>
</dbReference>
<dbReference type="Gene3D" id="3.30.70.2860">
    <property type="match status" value="1"/>
</dbReference>
<dbReference type="Gene3D" id="3.90.950.20">
    <property type="entry name" value="CinA-like"/>
    <property type="match status" value="1"/>
</dbReference>
<dbReference type="Gene3D" id="3.40.980.10">
    <property type="entry name" value="MoaB/Mog-like domain"/>
    <property type="match status" value="1"/>
</dbReference>
<dbReference type="HAMAP" id="MF_00226_B">
    <property type="entry name" value="CinA_B"/>
    <property type="match status" value="1"/>
</dbReference>
<dbReference type="InterPro" id="IPR050101">
    <property type="entry name" value="CinA"/>
</dbReference>
<dbReference type="InterPro" id="IPR036653">
    <property type="entry name" value="CinA-like_C"/>
</dbReference>
<dbReference type="InterPro" id="IPR008136">
    <property type="entry name" value="CinA_C"/>
</dbReference>
<dbReference type="InterPro" id="IPR041424">
    <property type="entry name" value="CinA_KH"/>
</dbReference>
<dbReference type="InterPro" id="IPR008135">
    <property type="entry name" value="Competence-induced_CinA"/>
</dbReference>
<dbReference type="InterPro" id="IPR036425">
    <property type="entry name" value="MoaB/Mog-like_dom_sf"/>
</dbReference>
<dbReference type="InterPro" id="IPR001453">
    <property type="entry name" value="MoaB/Mog_dom"/>
</dbReference>
<dbReference type="NCBIfam" id="TIGR00200">
    <property type="entry name" value="cinA_nterm"/>
    <property type="match status" value="1"/>
</dbReference>
<dbReference type="NCBIfam" id="TIGR00177">
    <property type="entry name" value="molyb_syn"/>
    <property type="match status" value="1"/>
</dbReference>
<dbReference type="NCBIfam" id="TIGR00199">
    <property type="entry name" value="PncC_domain"/>
    <property type="match status" value="1"/>
</dbReference>
<dbReference type="NCBIfam" id="NF001813">
    <property type="entry name" value="PRK00549.1"/>
    <property type="match status" value="1"/>
</dbReference>
<dbReference type="PANTHER" id="PTHR13939">
    <property type="entry name" value="NICOTINAMIDE-NUCLEOTIDE AMIDOHYDROLASE PNCC"/>
    <property type="match status" value="1"/>
</dbReference>
<dbReference type="PANTHER" id="PTHR13939:SF0">
    <property type="entry name" value="NMN AMIDOHYDROLASE-LIKE PROTEIN YFAY"/>
    <property type="match status" value="1"/>
</dbReference>
<dbReference type="Pfam" id="PF02464">
    <property type="entry name" value="CinA"/>
    <property type="match status" value="1"/>
</dbReference>
<dbReference type="Pfam" id="PF18146">
    <property type="entry name" value="CinA_KH"/>
    <property type="match status" value="1"/>
</dbReference>
<dbReference type="Pfam" id="PF00994">
    <property type="entry name" value="MoCF_biosynth"/>
    <property type="match status" value="1"/>
</dbReference>
<dbReference type="PIRSF" id="PIRSF006728">
    <property type="entry name" value="CinA"/>
    <property type="match status" value="1"/>
</dbReference>
<dbReference type="SMART" id="SM00852">
    <property type="entry name" value="MoCF_biosynth"/>
    <property type="match status" value="1"/>
</dbReference>
<dbReference type="SUPFAM" id="SSF142433">
    <property type="entry name" value="CinA-like"/>
    <property type="match status" value="1"/>
</dbReference>
<dbReference type="SUPFAM" id="SSF53218">
    <property type="entry name" value="Molybdenum cofactor biosynthesis proteins"/>
    <property type="match status" value="1"/>
</dbReference>
<proteinExistence type="inferred from homology"/>
<gene>
    <name type="ordered locus">Kole_1770</name>
</gene>
<sequence length="412" mass="44804">MKAEIISVGTELLLGDILNTNAQYLSKKLAELGIFLYRQTVVGDNMDRILQAFDEAFKRSELVITTGGLGPTQDDLTKEAAAKFFSKKLVLHKPTLQAIKDYFKGREEYLTEGNLKQAYIPEGAIVLDNFYGTAPGCIIEDSGKILIILPGPPKEMEPMFETAVMPYLMKLQNCVLYSKVLRVFGMGECLVVEKIKEIIENQDNPTIAPYAKEGEVLLRITARADNKELAEGMIAPIEKQIREKLGEYIYGVGEESLEEIVVNLLRKTGLTISTAESCTGGLVASKIVNVAGVSKVFMEGIIAYSNEAKVKRLGVKKETLSKFGAVSEETAIEMASGIAKSAGTDIGLSITGIAGPTGGTPEKPVGLVYLGLYVNGKTAVKKLQLGGDRNKIRNRAAMFALDFVRRALLPLV</sequence>
<accession>C5CFW1</accession>